<organism>
    <name type="scientific">Hydra vulgaris</name>
    <name type="common">Hydra</name>
    <name type="synonym">Hydra attenuata</name>
    <dbReference type="NCBI Taxonomy" id="6087"/>
    <lineage>
        <taxon>Eukaryota</taxon>
        <taxon>Metazoa</taxon>
        <taxon>Cnidaria</taxon>
        <taxon>Hydrozoa</taxon>
        <taxon>Hydroidolina</taxon>
        <taxon>Anthoathecata</taxon>
        <taxon>Aplanulata</taxon>
        <taxon>Hydridae</taxon>
        <taxon>Hydra</taxon>
    </lineage>
</organism>
<keyword id="KW-0002">3D-structure</keyword>
<keyword id="KW-0204">Cytolysis</keyword>
<keyword id="KW-0472">Membrane</keyword>
<keyword id="KW-0166">Nematocyst</keyword>
<keyword id="KW-1185">Reference proteome</keyword>
<keyword id="KW-0964">Secreted</keyword>
<keyword id="KW-0732">Signal</keyword>
<keyword id="KW-1052">Target cell membrane</keyword>
<keyword id="KW-1053">Target membrane</keyword>
<keyword id="KW-0800">Toxin</keyword>
<keyword id="KW-0812">Transmembrane</keyword>
<evidence type="ECO:0000250" key="1">
    <source>
        <dbReference type="UniProtKB" id="B9W5G6"/>
    </source>
</evidence>
<evidence type="ECO:0000250" key="2">
    <source>
        <dbReference type="UniProtKB" id="P07845"/>
    </source>
</evidence>
<evidence type="ECO:0000250" key="3">
    <source>
        <dbReference type="UniProtKB" id="P61914"/>
    </source>
</evidence>
<evidence type="ECO:0000255" key="4"/>
<evidence type="ECO:0000269" key="5">
    <source>
    </source>
</evidence>
<evidence type="ECO:0000269" key="6">
    <source>
    </source>
</evidence>
<evidence type="ECO:0000269" key="7">
    <source>
    </source>
</evidence>
<evidence type="ECO:0000269" key="8">
    <source>
    </source>
</evidence>
<evidence type="ECO:0000269" key="9">
    <source>
    </source>
</evidence>
<evidence type="ECO:0000303" key="10">
    <source>
    </source>
</evidence>
<evidence type="ECO:0000303" key="11">
    <source>
    </source>
</evidence>
<evidence type="ECO:0000305" key="12"/>
<evidence type="ECO:0007829" key="13">
    <source>
        <dbReference type="PDB" id="7EKZ"/>
    </source>
</evidence>
<accession>A0A8B7DWS6</accession>
<dbReference type="PDB" id="7EKZ">
    <property type="method" value="X-ray"/>
    <property type="resolution" value="1.43 A"/>
    <property type="chains" value="A=21-186"/>
</dbReference>
<dbReference type="PDBsum" id="7EKZ"/>
<dbReference type="SMR" id="A0A8B7DWS6"/>
<dbReference type="OrthoDB" id="8495133at2759"/>
<dbReference type="Proteomes" id="UP000694840">
    <property type="component" value="Unplaced"/>
</dbReference>
<dbReference type="GO" id="GO:0005576">
    <property type="term" value="C:extracellular region"/>
    <property type="evidence" value="ECO:0007669"/>
    <property type="project" value="UniProtKB-SubCell"/>
</dbReference>
<dbReference type="GO" id="GO:0042151">
    <property type="term" value="C:nematocyst"/>
    <property type="evidence" value="ECO:0007669"/>
    <property type="project" value="UniProtKB-SubCell"/>
</dbReference>
<dbReference type="GO" id="GO:0044218">
    <property type="term" value="C:other organism cell membrane"/>
    <property type="evidence" value="ECO:0007669"/>
    <property type="project" value="UniProtKB-KW"/>
</dbReference>
<dbReference type="GO" id="GO:0046930">
    <property type="term" value="C:pore complex"/>
    <property type="evidence" value="ECO:0007669"/>
    <property type="project" value="InterPro"/>
</dbReference>
<dbReference type="GO" id="GO:0015267">
    <property type="term" value="F:channel activity"/>
    <property type="evidence" value="ECO:0007669"/>
    <property type="project" value="InterPro"/>
</dbReference>
<dbReference type="GO" id="GO:0090729">
    <property type="term" value="F:toxin activity"/>
    <property type="evidence" value="ECO:0007669"/>
    <property type="project" value="UniProtKB-KW"/>
</dbReference>
<dbReference type="GO" id="GO:0051715">
    <property type="term" value="P:cytolysis in another organism"/>
    <property type="evidence" value="ECO:0007669"/>
    <property type="project" value="InterPro"/>
</dbReference>
<dbReference type="GO" id="GO:0006812">
    <property type="term" value="P:monoatomic cation transport"/>
    <property type="evidence" value="ECO:0007669"/>
    <property type="project" value="InterPro"/>
</dbReference>
<dbReference type="GO" id="GO:0046931">
    <property type="term" value="P:pore complex assembly"/>
    <property type="evidence" value="ECO:0007669"/>
    <property type="project" value="InterPro"/>
</dbReference>
<dbReference type="Gene3D" id="2.60.270.20">
    <property type="entry name" value="Cytolysin/lectin"/>
    <property type="match status" value="1"/>
</dbReference>
<dbReference type="InterPro" id="IPR050677">
    <property type="entry name" value="Actinoporin_PFT"/>
</dbReference>
<dbReference type="InterPro" id="IPR009104">
    <property type="entry name" value="Anemon_actinoporin-like"/>
</dbReference>
<dbReference type="InterPro" id="IPR015926">
    <property type="entry name" value="Cytolysin/lectin"/>
</dbReference>
<dbReference type="PANTHER" id="PTHR40388">
    <property type="entry name" value="BRYOPORIN"/>
    <property type="match status" value="1"/>
</dbReference>
<dbReference type="PANTHER" id="PTHR40388:SF1">
    <property type="entry name" value="BRYOPORIN"/>
    <property type="match status" value="1"/>
</dbReference>
<dbReference type="Pfam" id="PF06369">
    <property type="entry name" value="Anemone_cytotox"/>
    <property type="match status" value="1"/>
</dbReference>
<dbReference type="SUPFAM" id="SSF63724">
    <property type="entry name" value="Cytolysin/lectin"/>
    <property type="match status" value="1"/>
</dbReference>
<protein>
    <recommendedName>
        <fullName evidence="11">Hydra actinoporin-like toxin 1</fullName>
        <shortName evidence="11">HALT-1</shortName>
    </recommendedName>
    <alternativeName>
        <fullName evidence="10 11">Alpha-pore-forming toxin</fullName>
        <shortName evidence="10 11">alpha-PFT</shortName>
    </alternativeName>
    <alternativeName>
        <fullName evidence="10 12">DELTA-hydritoxin-Hma1a</fullName>
        <shortName evidence="10">DELTA-HYTX-Hma1a</shortName>
    </alternativeName>
</protein>
<sequence length="186" mass="20316">MLLYICLVNLLLPLSVGAASGAALGVIAKVGVDAALQQIDDVWKGKTVRYWKCAVENRSSKTLYALGTTQESGSMTTVFADIPPKSTGVFVWEKSRGAAKGAVGVVHYKYGNKVLNIMASIPYDWNLYKAWANVHLSDHKESFSDLYKGKNGAKYPTRAGNWGEVDGTKFFLTEKSHAEFKVIFSG</sequence>
<reference key="1">
    <citation type="journal article" date="2014" name="Toxicon">
        <title>Hydra actinoporin-like toxin-1, an unusual hemolysin from the nematocyst venom of Hydra magnipapillata which belongs to an extended gene family.</title>
        <authorList>
            <person name="Glasser E."/>
            <person name="Rachamim T."/>
            <person name="Aharonovich D."/>
            <person name="Sher D."/>
        </authorList>
    </citation>
    <scope>NUCLEOTIDE SEQUENCE [GENOMIC DNA]</scope>
    <scope>FUNCTION</scope>
    <scope>RECOMBINANT EXPRESSION</scope>
</reference>
<reference key="2">
    <citation type="journal article" date="2019" name="Toxicon">
        <title>Expansion of Hydra actinoporin-like toxin (HALT) gene family: expression divergence and functional convergence evolved through gene duplication.</title>
        <authorList>
            <person name="Yap W.Y."/>
            <person name="Tan K.J.S.X."/>
            <person name="Hwang J.S."/>
        </authorList>
    </citation>
    <scope>NUCLEOTIDE SEQUENCE [MRNA]</scope>
    <scope>SUBCELLULAR LOCATION</scope>
    <scope>TISSUE SPECIFICITY</scope>
    <scope>DEVELOPMENTAL STAGE</scope>
    <scope>RECOMBINANT EXPRESSION</scope>
</reference>
<reference key="3">
    <citation type="journal article" date="2015" name="Toxins">
        <title>Mutagenesis and functional analysis of the pore-forming toxin HALT-1 from Hydra magnipapillata.</title>
        <authorList>
            <person name="Liew Y.J."/>
            <person name="Soh W.T."/>
            <person name="Jiemy W.F."/>
            <person name="Hwang J.S."/>
        </authorList>
    </citation>
    <scope>MUTAGENESIS OF SER-20; CYS-53; LYS-94; TYR-128; TRP-131; ALA-132 AND TYR-147</scope>
</reference>
<reference key="4">
    <citation type="journal article" date="2017" name="Toxicon">
        <title>Identification of a target protein of Hydra actinoporin-like toxin-1 (HALT-1) using GST affinity purification and SILAC-based quantitative proteomics.</title>
        <authorList>
            <person name="Ameirika X."/>
            <person name="Sha H.X."/>
            <person name="Hwang J.S."/>
        </authorList>
    </citation>
    <scope>SUBUNIT</scope>
    <scope>RECOMBINANT EXPRESSION</scope>
</reference>
<reference key="5">
    <citation type="journal article" date="2021" name="Sci. Rep.">
        <title>Structural and functional analysis of Hydra Actinoporin-Like Toxin 1 (HALT-1).</title>
        <authorList>
            <person name="Ker D.S."/>
            <person name="Sha H.X."/>
            <person name="Jonet M.A."/>
            <person name="Hwang J.S."/>
            <person name="Ng C.L."/>
        </authorList>
    </citation>
    <scope>X-RAY CRYSTALLOGRAPHY (1.43 ANGSTROMS) OF 21-285</scope>
    <scope>RECOMBINANT EXPRESSION</scope>
    <scope>SUBUNIT</scope>
</reference>
<comment type="function">
    <text evidence="1 5 7 8">Pore-forming protein that forms hydrophilic pores and causes cytolysis (PubMed:24768765, PubMed:31513812). Compared to equinatoxin-2 (AC P61914), it reveals lower cytolysis activity (5-12-fold difference, tested on erythrocytes), a larger pore size (probably 2-3 nm) and different affinity to membrane lipids (100-fold lower affinity to sphingomyelin) (PubMed:24768765). Binds to sulfatides (SFT) as well as to the two sphingolipids, lysophosphatidic acid (LPA) and sphingosine-1-phosphate (S1P) (PubMed:31513812). It seems to bind more strongly to LPA than to S1P and SFT (PubMed:31513812). Shows cytolytic activity on HeLa cells, with a different potency than its paralogs (from most potent to less potent: HALT-4&gt;HALT-6~HALT-1&gt;HALT-3&gt;HALT-7&gt;HALT-2) (PubMed:31513812). Pore formation is a multi-step process that involves specific recognition of membrane lipid by a protein aromatic residues rich region, firm binding to the membrane (mainly driven by hydrophobic interactions) accompanied by the transfer of the N-terminal region to the lipid-water interface and finally pore formation after oligomerization of monomers (By similarity) (PubMed:31513812). In vitro, binds to the folate receptor alpha (FOLR1), a GPI-anchored membrane protein that plays a major role in the uptake of folate/folic acid into cells via endocytosis, suggesting a possible involvement of this receptor in the mechanism of HALT-1-induced cell lysis (PubMed:28478056). In vivo, does not cause visible paralysis in larvae of the blowfly Sarcophaga faculata, the most common arthropod prey of Hydra (PubMed:24768765).</text>
</comment>
<comment type="subunit">
    <text evidence="1 7 9">Octamer or nonamer in membranes (By similarity). Monomer in the soluble state (PubMed:34667248). In vitro, interacts with folate receptor alpha (of target organism) (PubMed:28478056).</text>
</comment>
<comment type="subcellular location">
    <subcellularLocation>
        <location evidence="8">Nematocyst</location>
    </subcellularLocation>
    <subcellularLocation>
        <location evidence="1">Secreted</location>
    </subcellularLocation>
    <subcellularLocation>
        <location evidence="1">Target cell membrane</location>
    </subcellularLocation>
    <text evidence="1 8">Is found in differentiating stenoteles (one type of nematocyst) (PubMed:31513812). Forms an alpha-helical membrane channel in the prey (By similarity).</text>
</comment>
<comment type="tissue specificity">
    <text evidence="8">Expressed female germline during oogenesis.</text>
</comment>
<comment type="developmental stage">
    <text evidence="8">Is expressed during oogenesis in female germline, and in differentiating stenoteles (one type of nematocyst).</text>
</comment>
<comment type="domain">
    <text evidence="3">Composed of a long N-terminal alpha-helix and a core region rich in beta-sheet structures. Before the pore formation, the alpha-helix binds the lipid membrane, partitions into the lipid-water interface and stabilizes the monomeric molecule on the membrane. Finally, it traverses the bilayer, thus forming the transmembrane pore.</text>
</comment>
<comment type="similarity">
    <text evidence="12">Belongs to the actinoporin family. HALT subfamily.</text>
</comment>
<name>ACTL1_HYDVU</name>
<feature type="signal peptide" evidence="4">
    <location>
        <begin position="1"/>
        <end position="18"/>
    </location>
</feature>
<feature type="chain" id="PRO_5034365299" description="Hydra actinoporin-like toxin 1">
    <location>
        <begin position="19"/>
        <end position="186"/>
    </location>
</feature>
<feature type="region of interest" description="N-terminal region" evidence="3">
    <location>
        <begin position="29"/>
        <end position="48"/>
    </location>
</feature>
<feature type="short sequence motif" description="Cell attachment site, crucial for protein stability" evidence="2 4">
    <location>
        <begin position="158"/>
        <end position="160"/>
    </location>
</feature>
<feature type="mutagenesis site" description="Important decrease in cytolytic and hemolytic activity." evidence="6">
    <original>S</original>
    <variation>SE</variation>
    <variation>SEE</variation>
    <variation>SEED</variation>
    <variation>SEEDE</variation>
    <location>
        <position position="20"/>
    </location>
</feature>
<feature type="mutagenesis site" description="Important decrease in cytolytic and loss in hemolytic activity." evidence="6">
    <original>K</original>
    <variation>A</variation>
    <location>
        <position position="94"/>
    </location>
</feature>
<feature type="mutagenesis site" description="Important decrease in cytolytic and loss in hemolytic activity." evidence="6">
    <original>Y</original>
    <variation>A</variation>
    <location>
        <position position="128"/>
    </location>
</feature>
<feature type="mutagenesis site" description="Important decrease in cytolytic and loss in hemolytic activity. Loss of binding to sulfatide, lysophosphatidic acid and sphingosine-1-phosphate." evidence="6 8">
    <original>W</original>
    <variation>A</variation>
    <location>
        <position position="131"/>
    </location>
</feature>
<feature type="mutagenesis site" description="Important decrease in cytolytic and loss in hemolytic activity. Loss of binding to sulfatide, lysophosphatidic acid and sphingosine-1-phosphate." evidence="6 8">
    <original>Y</original>
    <variation>A</variation>
    <location>
        <position position="147"/>
    </location>
</feature>
<feature type="helix" evidence="13">
    <location>
        <begin position="22"/>
        <end position="24"/>
    </location>
</feature>
<feature type="strand" evidence="13">
    <location>
        <begin position="26"/>
        <end position="29"/>
    </location>
</feature>
<feature type="helix" evidence="13">
    <location>
        <begin position="32"/>
        <end position="38"/>
    </location>
</feature>
<feature type="helix" evidence="13">
    <location>
        <begin position="40"/>
        <end position="42"/>
    </location>
</feature>
<feature type="strand" evidence="13">
    <location>
        <begin position="50"/>
        <end position="57"/>
    </location>
</feature>
<feature type="strand" evidence="13">
    <location>
        <begin position="59"/>
        <end position="61"/>
    </location>
</feature>
<feature type="strand" evidence="13">
    <location>
        <begin position="63"/>
        <end position="75"/>
    </location>
</feature>
<feature type="strand" evidence="13">
    <location>
        <begin position="86"/>
        <end position="93"/>
    </location>
</feature>
<feature type="strand" evidence="13">
    <location>
        <begin position="102"/>
        <end position="110"/>
    </location>
</feature>
<feature type="strand" evidence="13">
    <location>
        <begin position="113"/>
        <end position="121"/>
    </location>
</feature>
<feature type="turn" evidence="13">
    <location>
        <begin position="125"/>
        <end position="127"/>
    </location>
</feature>
<feature type="strand" evidence="13">
    <location>
        <begin position="131"/>
        <end position="139"/>
    </location>
</feature>
<feature type="helix" evidence="13">
    <location>
        <begin position="143"/>
        <end position="148"/>
    </location>
</feature>
<feature type="strand" evidence="13">
    <location>
        <begin position="163"/>
        <end position="165"/>
    </location>
</feature>
<feature type="strand" evidence="13">
    <location>
        <begin position="168"/>
        <end position="172"/>
    </location>
</feature>
<feature type="strand" evidence="13">
    <location>
        <begin position="174"/>
        <end position="184"/>
    </location>
</feature>
<proteinExistence type="evidence at protein level"/>